<keyword id="KW-0997">Cell inner membrane</keyword>
<keyword id="KW-1003">Cell membrane</keyword>
<keyword id="KW-0472">Membrane</keyword>
<keyword id="KW-1185">Reference proteome</keyword>
<keyword id="KW-0812">Transmembrane</keyword>
<keyword id="KW-1133">Transmembrane helix</keyword>
<keyword id="KW-0813">Transport</keyword>
<protein>
    <recommendedName>
        <fullName evidence="1">Intermembrane transport protein PqiA</fullName>
    </recommendedName>
</protein>
<name>PQIA_SHIFL</name>
<evidence type="ECO:0000250" key="1">
    <source>
        <dbReference type="UniProtKB" id="P0AFL9"/>
    </source>
</evidence>
<evidence type="ECO:0000255" key="2"/>
<evidence type="ECO:0000305" key="3"/>
<feature type="chain" id="PRO_0000058556" description="Intermembrane transport protein PqiA">
    <location>
        <begin position="1"/>
        <end position="417"/>
    </location>
</feature>
<feature type="topological domain" description="Cytoplasmic" evidence="1">
    <location>
        <begin position="1"/>
        <end position="50"/>
    </location>
</feature>
<feature type="transmembrane region" description="Helical" evidence="2">
    <location>
        <begin position="51"/>
        <end position="71"/>
    </location>
</feature>
<feature type="topological domain" description="Periplasmic" evidence="1">
    <location>
        <begin position="72"/>
        <end position="101"/>
    </location>
</feature>
<feature type="transmembrane region" description="Helical" evidence="2">
    <location>
        <begin position="102"/>
        <end position="122"/>
    </location>
</feature>
<feature type="topological domain" description="Cytoplasmic" evidence="1">
    <location>
        <begin position="123"/>
        <end position="256"/>
    </location>
</feature>
<feature type="transmembrane region" description="Helical" evidence="2">
    <location>
        <begin position="257"/>
        <end position="277"/>
    </location>
</feature>
<feature type="topological domain" description="Periplasmic" evidence="1">
    <location>
        <begin position="278"/>
        <end position="284"/>
    </location>
</feature>
<feature type="transmembrane region" description="Helical" evidence="2">
    <location>
        <begin position="285"/>
        <end position="305"/>
    </location>
</feature>
<feature type="topological domain" description="Cytoplasmic" evidence="1">
    <location>
        <begin position="306"/>
        <end position="346"/>
    </location>
</feature>
<feature type="transmembrane region" description="Helical" evidence="2">
    <location>
        <begin position="347"/>
        <end position="367"/>
    </location>
</feature>
<feature type="topological domain" description="Periplasmic" evidence="1">
    <location>
        <begin position="368"/>
        <end position="371"/>
    </location>
</feature>
<feature type="transmembrane region" description="Helical" evidence="2">
    <location>
        <begin position="372"/>
        <end position="392"/>
    </location>
</feature>
<feature type="topological domain" description="Cytoplasmic" evidence="1">
    <location>
        <begin position="393"/>
        <end position="417"/>
    </location>
</feature>
<organism>
    <name type="scientific">Shigella flexneri</name>
    <dbReference type="NCBI Taxonomy" id="623"/>
    <lineage>
        <taxon>Bacteria</taxon>
        <taxon>Pseudomonadati</taxon>
        <taxon>Pseudomonadota</taxon>
        <taxon>Gammaproteobacteria</taxon>
        <taxon>Enterobacterales</taxon>
        <taxon>Enterobacteriaceae</taxon>
        <taxon>Shigella</taxon>
    </lineage>
</organism>
<comment type="function">
    <text evidence="1">Component of a transport pathway that contributes to membrane integrity.</text>
</comment>
<comment type="subunit">
    <text evidence="1">May form a complex composed of PqiA, PqiB and PqiC.</text>
</comment>
<comment type="subcellular location">
    <subcellularLocation>
        <location evidence="1">Cell inner membrane</location>
        <topology evidence="1">Multi-pass membrane protein</topology>
    </subcellularLocation>
</comment>
<comment type="similarity">
    <text evidence="3">Belongs to the PqiA family.</text>
</comment>
<sequence>MCEHHHAAKHILCSQCDMLVALPRLEHGQKAACPRCGTTLTVAWDAPRQRPTAYALAALFMLLLSNLFPFVNMNVAGVTSEITLLEIPGVLFSEDYASLGTFFLLFVQLVPAFCLITILLLVNRAELPVRLKEQLARVLFQLKTWGMAEIFLAGVLVSFVKLMAYGSIGVGSSFLPWCLFCVLQLRAFQCVDRRWLWDDIAPMPELRQPLKPGVTGIRQGLRSCSCCTAILPADEPVCPRCSTKGYVRRRNSLQWTLALLVTSIMLYLPANILPIMVTDLLGSKMPSTILAGVILLWSEGSYPVAAVIFLASIMVPTLKMIAIAWLCWDAKGHGKRDSERMHLIYEVVEFVGRWSMIDVFVIAVLSALVRMGGLMSIYPAMGALMFALVVIMTMFSAMTFDPRLSWDRQPESEHEES</sequence>
<dbReference type="EMBL" id="AE005674">
    <property type="protein sequence ID" value="AAN42580.1"/>
    <property type="molecule type" value="Genomic_DNA"/>
</dbReference>
<dbReference type="EMBL" id="AE014073">
    <property type="protein sequence ID" value="AAP16464.1"/>
    <property type="molecule type" value="Genomic_DNA"/>
</dbReference>
<dbReference type="RefSeq" id="NP_706873.1">
    <property type="nucleotide sequence ID" value="NC_004337.2"/>
</dbReference>
<dbReference type="RefSeq" id="WP_000333176.1">
    <property type="nucleotide sequence ID" value="NZ_WPGW01000054.1"/>
</dbReference>
<dbReference type="STRING" id="198214.SF0951"/>
<dbReference type="PaxDb" id="198214-SF0951"/>
<dbReference type="GeneID" id="1023929"/>
<dbReference type="GeneID" id="93776464"/>
<dbReference type="KEGG" id="sfl:SF0951"/>
<dbReference type="KEGG" id="sfx:S1016"/>
<dbReference type="PATRIC" id="fig|198214.7.peg.1108"/>
<dbReference type="HOGENOM" id="CLU_041903_0_1_6"/>
<dbReference type="Proteomes" id="UP000001006">
    <property type="component" value="Chromosome"/>
</dbReference>
<dbReference type="Proteomes" id="UP000002673">
    <property type="component" value="Chromosome"/>
</dbReference>
<dbReference type="GO" id="GO:0005886">
    <property type="term" value="C:plasma membrane"/>
    <property type="evidence" value="ECO:0007669"/>
    <property type="project" value="UniProtKB-SubCell"/>
</dbReference>
<dbReference type="InterPro" id="IPR007498">
    <property type="entry name" value="PqiA-like"/>
</dbReference>
<dbReference type="InterPro" id="IPR005219">
    <property type="entry name" value="PqiA-like_proteobact"/>
</dbReference>
<dbReference type="InterPro" id="IPR051800">
    <property type="entry name" value="PqiA-PqiB_transport"/>
</dbReference>
<dbReference type="NCBIfam" id="TIGR00155">
    <property type="entry name" value="pqiA_fam"/>
    <property type="match status" value="1"/>
</dbReference>
<dbReference type="NCBIfam" id="NF011683">
    <property type="entry name" value="PRK15103.1"/>
    <property type="match status" value="1"/>
</dbReference>
<dbReference type="PANTHER" id="PTHR30462:SF3">
    <property type="entry name" value="INTERMEMBRANE TRANSPORT PROTEIN PQIA"/>
    <property type="match status" value="1"/>
</dbReference>
<dbReference type="PANTHER" id="PTHR30462">
    <property type="entry name" value="INTERMEMBRANE TRANSPORT PROTEIN PQIB-RELATED"/>
    <property type="match status" value="1"/>
</dbReference>
<dbReference type="Pfam" id="PF04403">
    <property type="entry name" value="PqiA"/>
    <property type="match status" value="2"/>
</dbReference>
<accession>P0AFM1</accession>
<accession>P43670</accession>
<accession>P77566</accession>
<gene>
    <name type="primary">pqiA</name>
    <name type="ordered locus">SF0951</name>
    <name type="ordered locus">S1016</name>
</gene>
<reference key="1">
    <citation type="journal article" date="2002" name="Nucleic Acids Res.">
        <title>Genome sequence of Shigella flexneri 2a: insights into pathogenicity through comparison with genomes of Escherichia coli K12 and O157.</title>
        <authorList>
            <person name="Jin Q."/>
            <person name="Yuan Z."/>
            <person name="Xu J."/>
            <person name="Wang Y."/>
            <person name="Shen Y."/>
            <person name="Lu W."/>
            <person name="Wang J."/>
            <person name="Liu H."/>
            <person name="Yang J."/>
            <person name="Yang F."/>
            <person name="Zhang X."/>
            <person name="Zhang J."/>
            <person name="Yang G."/>
            <person name="Wu H."/>
            <person name="Qu D."/>
            <person name="Dong J."/>
            <person name="Sun L."/>
            <person name="Xue Y."/>
            <person name="Zhao A."/>
            <person name="Gao Y."/>
            <person name="Zhu J."/>
            <person name="Kan B."/>
            <person name="Ding K."/>
            <person name="Chen S."/>
            <person name="Cheng H."/>
            <person name="Yao Z."/>
            <person name="He B."/>
            <person name="Chen R."/>
            <person name="Ma D."/>
            <person name="Qiang B."/>
            <person name="Wen Y."/>
            <person name="Hou Y."/>
            <person name="Yu J."/>
        </authorList>
    </citation>
    <scope>NUCLEOTIDE SEQUENCE [LARGE SCALE GENOMIC DNA]</scope>
    <source>
        <strain>301 / Serotype 2a</strain>
    </source>
</reference>
<reference key="2">
    <citation type="journal article" date="2003" name="Infect. Immun.">
        <title>Complete genome sequence and comparative genomics of Shigella flexneri serotype 2a strain 2457T.</title>
        <authorList>
            <person name="Wei J."/>
            <person name="Goldberg M.B."/>
            <person name="Burland V."/>
            <person name="Venkatesan M.M."/>
            <person name="Deng W."/>
            <person name="Fournier G."/>
            <person name="Mayhew G.F."/>
            <person name="Plunkett G. III"/>
            <person name="Rose D.J."/>
            <person name="Darling A."/>
            <person name="Mau B."/>
            <person name="Perna N.T."/>
            <person name="Payne S.M."/>
            <person name="Runyen-Janecky L.J."/>
            <person name="Zhou S."/>
            <person name="Schwartz D.C."/>
            <person name="Blattner F.R."/>
        </authorList>
    </citation>
    <scope>NUCLEOTIDE SEQUENCE [LARGE SCALE GENOMIC DNA]</scope>
    <source>
        <strain>ATCC 700930 / 2457T / Serotype 2a</strain>
    </source>
</reference>
<proteinExistence type="inferred from homology"/>